<comment type="function">
    <text evidence="1">RNaseP catalyzes the removal of the 5'-leader sequence from pre-tRNA to produce the mature 5'-terminus. It can also cleave other RNA substrates such as 4.5S RNA. The protein component plays an auxiliary but essential role in vivo by binding to the 5'-leader sequence and broadening the substrate specificity of the ribozyme.</text>
</comment>
<comment type="catalytic activity">
    <reaction evidence="1">
        <text>Endonucleolytic cleavage of RNA, removing 5'-extranucleotides from tRNA precursor.</text>
        <dbReference type="EC" id="3.1.26.5"/>
    </reaction>
</comment>
<comment type="subunit">
    <text evidence="1">Consists of a catalytic RNA component (M1 or rnpB) and a protein subunit.</text>
</comment>
<comment type="miscellaneous">
    <text>The open reading frame (ORF) for this protein entirely encompasses the ORF for the 50S ribosomal protein L34 (rpmH). The two start codons are separated by four nucleotides.</text>
</comment>
<comment type="similarity">
    <text evidence="1">Belongs to the RnpA family.</text>
</comment>
<gene>
    <name evidence="1" type="primary">rnpA</name>
</gene>
<reference key="1">
    <citation type="journal article" date="2003" name="Proc. Natl. Acad. Sci. U.S.A.">
        <title>An unusual mechanism of bacterial gene expression revealed for the RNase P protein of Thermus strains.</title>
        <authorList>
            <person name="Feltens R."/>
            <person name="Gossringer M."/>
            <person name="Willkomm D.K."/>
            <person name="Urlaub H."/>
            <person name="Hartmann R.K."/>
        </authorList>
    </citation>
    <scope>NUCLEOTIDE SEQUENCE [GENOMIC DNA]</scope>
    <source>
        <strain>EP 00276</strain>
    </source>
</reference>
<evidence type="ECO:0000255" key="1">
    <source>
        <dbReference type="HAMAP-Rule" id="MF_00227"/>
    </source>
</evidence>
<evidence type="ECO:0000256" key="2">
    <source>
        <dbReference type="SAM" id="MobiDB-lite"/>
    </source>
</evidence>
<protein>
    <recommendedName>
        <fullName evidence="1">Ribonuclease P protein component</fullName>
        <shortName evidence="1">RNase P protein</shortName>
        <shortName evidence="1">RNaseP protein</shortName>
        <ecNumber evidence="1">3.1.26.5</ecNumber>
    </recommendedName>
    <alternativeName>
        <fullName evidence="1">Protein C5</fullName>
    </alternativeName>
</protein>
<keyword id="KW-0255">Endonuclease</keyword>
<keyword id="KW-0378">Hydrolase</keyword>
<keyword id="KW-0540">Nuclease</keyword>
<keyword id="KW-0694">RNA-binding</keyword>
<keyword id="KW-0819">tRNA processing</keyword>
<accession>Q7X5L4</accession>
<name>RNPA_THEAQ</name>
<sequence>MDEKDLATQPEEAGQDPRLPGPHEDPRRQERAEAQAKKGPLAPDAQGKRLGQGPPKAGGRLLSLKGDRAFQRLRKGRAGRGRFVSVKWLPAPEARVGIVVSKKVGKAVVRNKVKRRLREILRRLHLPKAHILLVASPEAREAGFAELFQDVVRALRKSGLIQ</sequence>
<organism>
    <name type="scientific">Thermus aquaticus</name>
    <dbReference type="NCBI Taxonomy" id="271"/>
    <lineage>
        <taxon>Bacteria</taxon>
        <taxon>Thermotogati</taxon>
        <taxon>Deinococcota</taxon>
        <taxon>Deinococci</taxon>
        <taxon>Thermales</taxon>
        <taxon>Thermaceae</taxon>
        <taxon>Thermus</taxon>
    </lineage>
</organism>
<dbReference type="EC" id="3.1.26.5" evidence="1"/>
<dbReference type="EMBL" id="AY256338">
    <property type="protein sequence ID" value="AAO88969.1"/>
    <property type="molecule type" value="Genomic_DNA"/>
</dbReference>
<dbReference type="SMR" id="Q7X5L4"/>
<dbReference type="GO" id="GO:0030677">
    <property type="term" value="C:ribonuclease P complex"/>
    <property type="evidence" value="ECO:0007669"/>
    <property type="project" value="TreeGrafter"/>
</dbReference>
<dbReference type="GO" id="GO:0042781">
    <property type="term" value="F:3'-tRNA processing endoribonuclease activity"/>
    <property type="evidence" value="ECO:0007669"/>
    <property type="project" value="TreeGrafter"/>
</dbReference>
<dbReference type="GO" id="GO:0004526">
    <property type="term" value="F:ribonuclease P activity"/>
    <property type="evidence" value="ECO:0007669"/>
    <property type="project" value="UniProtKB-UniRule"/>
</dbReference>
<dbReference type="GO" id="GO:0000049">
    <property type="term" value="F:tRNA binding"/>
    <property type="evidence" value="ECO:0007669"/>
    <property type="project" value="UniProtKB-UniRule"/>
</dbReference>
<dbReference type="GO" id="GO:0001682">
    <property type="term" value="P:tRNA 5'-leader removal"/>
    <property type="evidence" value="ECO:0007669"/>
    <property type="project" value="UniProtKB-UniRule"/>
</dbReference>
<dbReference type="Gene3D" id="3.30.230.10">
    <property type="match status" value="1"/>
</dbReference>
<dbReference type="HAMAP" id="MF_00227">
    <property type="entry name" value="RNase_P"/>
    <property type="match status" value="1"/>
</dbReference>
<dbReference type="InterPro" id="IPR020568">
    <property type="entry name" value="Ribosomal_Su5_D2-typ_SF"/>
</dbReference>
<dbReference type="InterPro" id="IPR014721">
    <property type="entry name" value="Ribsml_uS5_D2-typ_fold_subgr"/>
</dbReference>
<dbReference type="InterPro" id="IPR000100">
    <property type="entry name" value="RNase_P"/>
</dbReference>
<dbReference type="InterPro" id="IPR020539">
    <property type="entry name" value="RNase_P_CS"/>
</dbReference>
<dbReference type="NCBIfam" id="TIGR00188">
    <property type="entry name" value="rnpA"/>
    <property type="match status" value="1"/>
</dbReference>
<dbReference type="PANTHER" id="PTHR33992">
    <property type="entry name" value="RIBONUCLEASE P PROTEIN COMPONENT"/>
    <property type="match status" value="1"/>
</dbReference>
<dbReference type="PANTHER" id="PTHR33992:SF1">
    <property type="entry name" value="RIBONUCLEASE P PROTEIN COMPONENT"/>
    <property type="match status" value="1"/>
</dbReference>
<dbReference type="Pfam" id="PF00825">
    <property type="entry name" value="Ribonuclease_P"/>
    <property type="match status" value="1"/>
</dbReference>
<dbReference type="SUPFAM" id="SSF54211">
    <property type="entry name" value="Ribosomal protein S5 domain 2-like"/>
    <property type="match status" value="1"/>
</dbReference>
<dbReference type="PROSITE" id="PS00648">
    <property type="entry name" value="RIBONUCLEASE_P"/>
    <property type="match status" value="1"/>
</dbReference>
<feature type="chain" id="PRO_0000198552" description="Ribonuclease P protein component">
    <location>
        <begin position="1"/>
        <end position="162"/>
    </location>
</feature>
<feature type="region of interest" description="Disordered" evidence="2">
    <location>
        <begin position="1"/>
        <end position="62"/>
    </location>
</feature>
<feature type="compositionally biased region" description="Basic and acidic residues" evidence="2">
    <location>
        <begin position="21"/>
        <end position="36"/>
    </location>
</feature>
<proteinExistence type="inferred from homology"/>